<feature type="chain" id="PRO_0000093843" description="Auxin transporter-like protein 2">
    <location>
        <begin position="1"/>
        <end position="483"/>
    </location>
</feature>
<feature type="topological domain" description="Cytoplasmic" evidence="2">
    <location>
        <begin position="1"/>
        <end position="53"/>
    </location>
</feature>
<feature type="transmembrane region" description="Helical" evidence="2">
    <location>
        <begin position="54"/>
        <end position="71"/>
    </location>
</feature>
<feature type="topological domain" description="Extracellular" evidence="2">
    <location>
        <begin position="72"/>
        <end position="73"/>
    </location>
</feature>
<feature type="transmembrane region" description="Helical" evidence="2">
    <location>
        <begin position="74"/>
        <end position="94"/>
    </location>
</feature>
<feature type="topological domain" description="Cytoplasmic" evidence="2">
    <location>
        <begin position="95"/>
        <end position="130"/>
    </location>
</feature>
<feature type="transmembrane region" description="Helical" evidence="2">
    <location>
        <begin position="131"/>
        <end position="151"/>
    </location>
</feature>
<feature type="topological domain" description="Extracellular" evidence="2">
    <location>
        <begin position="152"/>
        <end position="166"/>
    </location>
</feature>
<feature type="transmembrane region" description="Helical" evidence="2">
    <location>
        <begin position="167"/>
        <end position="187"/>
    </location>
</feature>
<feature type="topological domain" description="Cytoplasmic" evidence="2">
    <location>
        <begin position="188"/>
        <end position="190"/>
    </location>
</feature>
<feature type="transmembrane region" description="Helical" evidence="2">
    <location>
        <begin position="191"/>
        <end position="211"/>
    </location>
</feature>
<feature type="topological domain" description="Extracellular" evidence="2">
    <location>
        <begin position="212"/>
        <end position="226"/>
    </location>
</feature>
<feature type="transmembrane region" description="Helical" evidence="2">
    <location>
        <begin position="227"/>
        <end position="247"/>
    </location>
</feature>
<feature type="topological domain" description="Cytoplasmic" evidence="2">
    <location>
        <begin position="248"/>
        <end position="261"/>
    </location>
</feature>
<feature type="transmembrane region" description="Helical" evidence="2">
    <location>
        <begin position="262"/>
        <end position="282"/>
    </location>
</feature>
<feature type="topological domain" description="Extracellular" evidence="2">
    <location>
        <begin position="283"/>
        <end position="306"/>
    </location>
</feature>
<feature type="transmembrane region" description="Helical" evidence="2">
    <location>
        <begin position="307"/>
        <end position="327"/>
    </location>
</feature>
<feature type="topological domain" description="Cytoplasmic" evidence="2">
    <location>
        <begin position="328"/>
        <end position="350"/>
    </location>
</feature>
<feature type="transmembrane region" description="Helical" evidence="2">
    <location>
        <begin position="351"/>
        <end position="371"/>
    </location>
</feature>
<feature type="topological domain" description="Extracellular" evidence="2">
    <location>
        <begin position="372"/>
        <end position="374"/>
    </location>
</feature>
<feature type="transmembrane region" description="Helical" evidence="2">
    <location>
        <begin position="375"/>
        <end position="395"/>
    </location>
</feature>
<feature type="topological domain" description="Cytoplasmic" evidence="2">
    <location>
        <begin position="396"/>
        <end position="422"/>
    </location>
</feature>
<feature type="transmembrane region" description="Helical" evidence="2">
    <location>
        <begin position="423"/>
        <end position="443"/>
    </location>
</feature>
<feature type="topological domain" description="Extracellular" evidence="2">
    <location>
        <begin position="444"/>
        <end position="483"/>
    </location>
</feature>
<feature type="glycosylation site" description="N-linked (GlcNAc...) asparagine" evidence="2">
    <location>
        <position position="291"/>
    </location>
</feature>
<feature type="glycosylation site" description="N-linked (GlcNAc...) asparagine" evidence="2">
    <location>
        <position position="478"/>
    </location>
</feature>
<keyword id="KW-0029">Amino-acid transport</keyword>
<keyword id="KW-0927">Auxin signaling pathway</keyword>
<keyword id="KW-1003">Cell membrane</keyword>
<keyword id="KW-0325">Glycoprotein</keyword>
<keyword id="KW-0472">Membrane</keyword>
<keyword id="KW-1185">Reference proteome</keyword>
<keyword id="KW-0769">Symport</keyword>
<keyword id="KW-0812">Transmembrane</keyword>
<keyword id="KW-1133">Transmembrane helix</keyword>
<keyword id="KW-0813">Transport</keyword>
<dbReference type="EMBL" id="AJ243221">
    <property type="protein sequence ID" value="CAB45643.1"/>
    <property type="molecule type" value="Genomic_DNA"/>
</dbReference>
<dbReference type="EMBL" id="AC006264">
    <property type="protein sequence ID" value="AAD29811.1"/>
    <property type="molecule type" value="Genomic_DNA"/>
</dbReference>
<dbReference type="EMBL" id="CP002685">
    <property type="protein sequence ID" value="AEC07116.1"/>
    <property type="molecule type" value="Genomic_DNA"/>
</dbReference>
<dbReference type="EMBL" id="AY054684">
    <property type="protein sequence ID" value="AAK96875.1"/>
    <property type="molecule type" value="mRNA"/>
</dbReference>
<dbReference type="EMBL" id="AY128714">
    <property type="protein sequence ID" value="AAM91114.1"/>
    <property type="molecule type" value="mRNA"/>
</dbReference>
<dbReference type="PIR" id="E84596">
    <property type="entry name" value="E84596"/>
</dbReference>
<dbReference type="RefSeq" id="NP_179701.1">
    <property type="nucleotide sequence ID" value="NM_127675.3"/>
</dbReference>
<dbReference type="SMR" id="Q9S836"/>
<dbReference type="BioGRID" id="1993">
    <property type="interactions" value="3"/>
</dbReference>
<dbReference type="FunCoup" id="Q9S836">
    <property type="interactions" value="311"/>
</dbReference>
<dbReference type="IntAct" id="Q9S836">
    <property type="interactions" value="1"/>
</dbReference>
<dbReference type="STRING" id="3702.Q9S836"/>
<dbReference type="GlyCosmos" id="Q9S836">
    <property type="glycosylation" value="2 sites, No reported glycans"/>
</dbReference>
<dbReference type="GlyGen" id="Q9S836">
    <property type="glycosylation" value="2 sites"/>
</dbReference>
<dbReference type="PaxDb" id="3702-AT2G21050.1"/>
<dbReference type="ProteomicsDB" id="250717"/>
<dbReference type="EnsemblPlants" id="AT2G21050.1">
    <property type="protein sequence ID" value="AT2G21050.1"/>
    <property type="gene ID" value="AT2G21050"/>
</dbReference>
<dbReference type="GeneID" id="816640"/>
<dbReference type="Gramene" id="AT2G21050.1">
    <property type="protein sequence ID" value="AT2G21050.1"/>
    <property type="gene ID" value="AT2G21050"/>
</dbReference>
<dbReference type="KEGG" id="ath:AT2G21050"/>
<dbReference type="Araport" id="AT2G21050"/>
<dbReference type="TAIR" id="AT2G21050">
    <property type="gene designation" value="LAX2"/>
</dbReference>
<dbReference type="eggNOG" id="KOG1303">
    <property type="taxonomic scope" value="Eukaryota"/>
</dbReference>
<dbReference type="HOGENOM" id="CLU_027994_2_0_1"/>
<dbReference type="InParanoid" id="Q9S836"/>
<dbReference type="OMA" id="FWHGGST"/>
<dbReference type="PhylomeDB" id="Q9S836"/>
<dbReference type="PRO" id="PR:Q9S836"/>
<dbReference type="Proteomes" id="UP000006548">
    <property type="component" value="Chromosome 2"/>
</dbReference>
<dbReference type="ExpressionAtlas" id="Q9S836">
    <property type="expression patterns" value="baseline and differential"/>
</dbReference>
<dbReference type="GO" id="GO:0005886">
    <property type="term" value="C:plasma membrane"/>
    <property type="evidence" value="ECO:0007669"/>
    <property type="project" value="UniProtKB-SubCell"/>
</dbReference>
<dbReference type="GO" id="GO:0015293">
    <property type="term" value="F:symporter activity"/>
    <property type="evidence" value="ECO:0007669"/>
    <property type="project" value="UniProtKB-KW"/>
</dbReference>
<dbReference type="GO" id="GO:0006865">
    <property type="term" value="P:amino acid transport"/>
    <property type="evidence" value="ECO:0007669"/>
    <property type="project" value="UniProtKB-KW"/>
</dbReference>
<dbReference type="GO" id="GO:0009734">
    <property type="term" value="P:auxin-activated signaling pathway"/>
    <property type="evidence" value="ECO:0007669"/>
    <property type="project" value="UniProtKB-KW"/>
</dbReference>
<dbReference type="GO" id="GO:0010588">
    <property type="term" value="P:cotyledon vascular tissue pattern formation"/>
    <property type="evidence" value="ECO:0000315"/>
    <property type="project" value="TAIR"/>
</dbReference>
<dbReference type="GO" id="GO:0009624">
    <property type="term" value="P:response to nematode"/>
    <property type="evidence" value="ECO:0007007"/>
    <property type="project" value="TAIR"/>
</dbReference>
<dbReference type="GO" id="GO:0048829">
    <property type="term" value="P:root cap development"/>
    <property type="evidence" value="ECO:0000316"/>
    <property type="project" value="TAIR"/>
</dbReference>
<dbReference type="InterPro" id="IPR013057">
    <property type="entry name" value="AA_transpt_TM"/>
</dbReference>
<dbReference type="PANTHER" id="PTHR48017">
    <property type="entry name" value="OS05G0424000 PROTEIN-RELATED"/>
    <property type="match status" value="1"/>
</dbReference>
<dbReference type="Pfam" id="PF01490">
    <property type="entry name" value="Aa_trans"/>
    <property type="match status" value="1"/>
</dbReference>
<evidence type="ECO:0000250" key="1"/>
<evidence type="ECO:0000255" key="2"/>
<evidence type="ECO:0000305" key="3"/>
<organism>
    <name type="scientific">Arabidopsis thaliana</name>
    <name type="common">Mouse-ear cress</name>
    <dbReference type="NCBI Taxonomy" id="3702"/>
    <lineage>
        <taxon>Eukaryota</taxon>
        <taxon>Viridiplantae</taxon>
        <taxon>Streptophyta</taxon>
        <taxon>Embryophyta</taxon>
        <taxon>Tracheophyta</taxon>
        <taxon>Spermatophyta</taxon>
        <taxon>Magnoliopsida</taxon>
        <taxon>eudicotyledons</taxon>
        <taxon>Gunneridae</taxon>
        <taxon>Pentapetalae</taxon>
        <taxon>rosids</taxon>
        <taxon>malvids</taxon>
        <taxon>Brassicales</taxon>
        <taxon>Brassicaceae</taxon>
        <taxon>Camelineae</taxon>
        <taxon>Arabidopsis</taxon>
    </lineage>
</organism>
<reference key="1">
    <citation type="journal article" date="2001" name="J. Plant Growth Regul.">
        <title>Quick on the uptake: characterization of a family of plant auxin influx carriers.</title>
        <authorList>
            <person name="Parry P.G."/>
            <person name="Marchant A."/>
            <person name="May S.T."/>
            <person name="Swarup R."/>
            <person name="Swarup K."/>
            <person name="James N."/>
            <person name="Graham N."/>
            <person name="Allen T."/>
            <person name="Martucci T."/>
            <person name="Yemm A."/>
            <person name="Napier R."/>
            <person name="Manning K."/>
            <person name="King G."/>
            <person name="Bennett M.J."/>
        </authorList>
    </citation>
    <scope>NUCLEOTIDE SEQUENCE [GENOMIC DNA]</scope>
    <scope>GENE FAMILY</scope>
    <scope>NOMENCLATURE</scope>
</reference>
<reference key="2">
    <citation type="journal article" date="1999" name="Nature">
        <title>Sequence and analysis of chromosome 2 of the plant Arabidopsis thaliana.</title>
        <authorList>
            <person name="Lin X."/>
            <person name="Kaul S."/>
            <person name="Rounsley S.D."/>
            <person name="Shea T.P."/>
            <person name="Benito M.-I."/>
            <person name="Town C.D."/>
            <person name="Fujii C.Y."/>
            <person name="Mason T.M."/>
            <person name="Bowman C.L."/>
            <person name="Barnstead M.E."/>
            <person name="Feldblyum T.V."/>
            <person name="Buell C.R."/>
            <person name="Ketchum K.A."/>
            <person name="Lee J.J."/>
            <person name="Ronning C.M."/>
            <person name="Koo H.L."/>
            <person name="Moffat K.S."/>
            <person name="Cronin L.A."/>
            <person name="Shen M."/>
            <person name="Pai G."/>
            <person name="Van Aken S."/>
            <person name="Umayam L."/>
            <person name="Tallon L.J."/>
            <person name="Gill J.E."/>
            <person name="Adams M.D."/>
            <person name="Carrera A.J."/>
            <person name="Creasy T.H."/>
            <person name="Goodman H.M."/>
            <person name="Somerville C.R."/>
            <person name="Copenhaver G.P."/>
            <person name="Preuss D."/>
            <person name="Nierman W.C."/>
            <person name="White O."/>
            <person name="Eisen J.A."/>
            <person name="Salzberg S.L."/>
            <person name="Fraser C.M."/>
            <person name="Venter J.C."/>
        </authorList>
    </citation>
    <scope>NUCLEOTIDE SEQUENCE [LARGE SCALE GENOMIC DNA]</scope>
    <source>
        <strain>cv. Columbia</strain>
    </source>
</reference>
<reference key="3">
    <citation type="journal article" date="2017" name="Plant J.">
        <title>Araport11: a complete reannotation of the Arabidopsis thaliana reference genome.</title>
        <authorList>
            <person name="Cheng C.Y."/>
            <person name="Krishnakumar V."/>
            <person name="Chan A.P."/>
            <person name="Thibaud-Nissen F."/>
            <person name="Schobel S."/>
            <person name="Town C.D."/>
        </authorList>
    </citation>
    <scope>GENOME REANNOTATION</scope>
    <source>
        <strain>cv. Columbia</strain>
    </source>
</reference>
<reference key="4">
    <citation type="journal article" date="2003" name="Science">
        <title>Empirical analysis of transcriptional activity in the Arabidopsis genome.</title>
        <authorList>
            <person name="Yamada K."/>
            <person name="Lim J."/>
            <person name="Dale J.M."/>
            <person name="Chen H."/>
            <person name="Shinn P."/>
            <person name="Palm C.J."/>
            <person name="Southwick A.M."/>
            <person name="Wu H.C."/>
            <person name="Kim C.J."/>
            <person name="Nguyen M."/>
            <person name="Pham P.K."/>
            <person name="Cheuk R.F."/>
            <person name="Karlin-Newmann G."/>
            <person name="Liu S.X."/>
            <person name="Lam B."/>
            <person name="Sakano H."/>
            <person name="Wu T."/>
            <person name="Yu G."/>
            <person name="Miranda M."/>
            <person name="Quach H.L."/>
            <person name="Tripp M."/>
            <person name="Chang C.H."/>
            <person name="Lee J.M."/>
            <person name="Toriumi M.J."/>
            <person name="Chan M.M."/>
            <person name="Tang C.C."/>
            <person name="Onodera C.S."/>
            <person name="Deng J.M."/>
            <person name="Akiyama K."/>
            <person name="Ansari Y."/>
            <person name="Arakawa T."/>
            <person name="Banh J."/>
            <person name="Banno F."/>
            <person name="Bowser L."/>
            <person name="Brooks S.Y."/>
            <person name="Carninci P."/>
            <person name="Chao Q."/>
            <person name="Choy N."/>
            <person name="Enju A."/>
            <person name="Goldsmith A.D."/>
            <person name="Gurjal M."/>
            <person name="Hansen N.F."/>
            <person name="Hayashizaki Y."/>
            <person name="Johnson-Hopson C."/>
            <person name="Hsuan V.W."/>
            <person name="Iida K."/>
            <person name="Karnes M."/>
            <person name="Khan S."/>
            <person name="Koesema E."/>
            <person name="Ishida J."/>
            <person name="Jiang P.X."/>
            <person name="Jones T."/>
            <person name="Kawai J."/>
            <person name="Kamiya A."/>
            <person name="Meyers C."/>
            <person name="Nakajima M."/>
            <person name="Narusaka M."/>
            <person name="Seki M."/>
            <person name="Sakurai T."/>
            <person name="Satou M."/>
            <person name="Tamse R."/>
            <person name="Vaysberg M."/>
            <person name="Wallender E.K."/>
            <person name="Wong C."/>
            <person name="Yamamura Y."/>
            <person name="Yuan S."/>
            <person name="Shinozaki K."/>
            <person name="Davis R.W."/>
            <person name="Theologis A."/>
            <person name="Ecker J.R."/>
        </authorList>
    </citation>
    <scope>NUCLEOTIDE SEQUENCE [LARGE SCALE MRNA]</scope>
    <source>
        <strain>cv. Columbia</strain>
    </source>
</reference>
<comment type="function">
    <text evidence="1">Carrier protein involved in proton-driven auxin influx. Mediates the formation of auxin gradient from developing leaves (site of auxin biosynthesis) to tips by contributing to the loading of auxin in vascular tissues and facilitating acropetal (base to tip) auxin transport within inner tissues of the root apex, and basipetal (tip to base) auxin transport within outer tissues of the root apex (By similarity).</text>
</comment>
<comment type="subcellular location">
    <subcellularLocation>
        <location evidence="1">Cell membrane</location>
        <topology evidence="1">Multi-pass membrane protein</topology>
    </subcellularLocation>
</comment>
<comment type="similarity">
    <text evidence="3">Belongs to the amino acid/polyamine transporter 2 family. Amino acid/auxin permease (AAAP) (TC 2.A.18.1) subfamily.</text>
</comment>
<sequence>MENGEKAAETVVVGNYVEMEKDGKALDIKSKLSDMFWHGGSAYDAWFSCASNQVAQVLLTLPYSFSQLGMLSGILFQLFYGILGSWTAYLISILYVEYRTRKEREKVNFRNHVIQWFEVLDGLLGKHWRNVGLAFNCTFLLFGSVIQLIACASNIYYINDNLDKRTWTYIFGACCATTVFIPSFHNYRIWSFLGLLMTTYTAWYLTIASILHGQVEGVKHSGPSKLVLYFTGATNILYTFGGHAVTVEIMHAMWKPQKFKSIYLFATLYVLTLTLPSASAVYWAFGDLLLNHSNAFALLPKNLYRDFAVVLMLIHQFITFGFACTPLYFVWEKLIGMHECRSMCKRAAARLPVVIPIWFLAIIFPFFGPINSTVGSLLVSFTVYIIPALAHIFTFRSSAARENAVEQPPRFLGRWTGAFTINAFIVVWVFIVGFGFGGWASMINFVHQIDTFGLFTKCYQCPPPVMVSPPPISHPHFNHTHGL</sequence>
<gene>
    <name type="primary">LAX2</name>
    <name type="ordered locus">At2g21050</name>
    <name type="ORF">F26H11.19</name>
</gene>
<name>LAX2_ARATH</name>
<accession>Q9S836</accession>
<proteinExistence type="evidence at transcript level"/>
<protein>
    <recommendedName>
        <fullName>Auxin transporter-like protein 2</fullName>
    </recommendedName>
    <alternativeName>
        <fullName>AUX1-like protein 2</fullName>
    </alternativeName>
</protein>